<dbReference type="EMBL" id="AY827468">
    <property type="protein sequence ID" value="AAX33644.1"/>
    <property type="molecule type" value="mRNA"/>
</dbReference>
<dbReference type="EMBL" id="AC016661">
    <property type="protein sequence ID" value="AAF23301.1"/>
    <property type="molecule type" value="Genomic_DNA"/>
</dbReference>
<dbReference type="EMBL" id="CP002686">
    <property type="protein sequence ID" value="AEE74801.1"/>
    <property type="molecule type" value="Genomic_DNA"/>
</dbReference>
<dbReference type="EMBL" id="BT020272">
    <property type="protein sequence ID" value="AAV84493.1"/>
    <property type="molecule type" value="mRNA"/>
</dbReference>
<dbReference type="EMBL" id="BT020448">
    <property type="protein sequence ID" value="AAW30026.1"/>
    <property type="molecule type" value="mRNA"/>
</dbReference>
<dbReference type="RefSeq" id="NP_187582.1">
    <molecule id="Q9SF32-1"/>
    <property type="nucleotide sequence ID" value="NM_111805.3"/>
</dbReference>
<dbReference type="SMR" id="Q9SF32"/>
<dbReference type="BioGRID" id="5462">
    <property type="interactions" value="2"/>
</dbReference>
<dbReference type="FunCoup" id="Q9SF32">
    <property type="interactions" value="445"/>
</dbReference>
<dbReference type="IntAct" id="Q9SF32">
    <property type="interactions" value="1"/>
</dbReference>
<dbReference type="STRING" id="3702.Q9SF32"/>
<dbReference type="GlyGen" id="Q9SF32">
    <property type="glycosylation" value="1 site"/>
</dbReference>
<dbReference type="iPTMnet" id="Q9SF32"/>
<dbReference type="PaxDb" id="3702-AT3G09710.2"/>
<dbReference type="ProteomicsDB" id="228833">
    <molecule id="Q9SF32-1"/>
</dbReference>
<dbReference type="EnsemblPlants" id="AT3G09710.1">
    <molecule id="Q9SF32-1"/>
    <property type="protein sequence ID" value="AT3G09710.1"/>
    <property type="gene ID" value="AT3G09710"/>
</dbReference>
<dbReference type="GeneID" id="820128"/>
<dbReference type="Gramene" id="AT3G09710.1">
    <molecule id="Q9SF32-1"/>
    <property type="protein sequence ID" value="AT3G09710.1"/>
    <property type="gene ID" value="AT3G09710"/>
</dbReference>
<dbReference type="KEGG" id="ath:AT3G09710"/>
<dbReference type="Araport" id="AT3G09710"/>
<dbReference type="TAIR" id="AT3G09710">
    <property type="gene designation" value="IQD1"/>
</dbReference>
<dbReference type="eggNOG" id="ENOG502QUAG">
    <property type="taxonomic scope" value="Eukaryota"/>
</dbReference>
<dbReference type="HOGENOM" id="CLU_024547_3_1_1"/>
<dbReference type="InParanoid" id="Q9SF32"/>
<dbReference type="OrthoDB" id="1110526at2759"/>
<dbReference type="PhylomeDB" id="Q9SF32"/>
<dbReference type="PRO" id="PR:Q9SF32"/>
<dbReference type="Proteomes" id="UP000006548">
    <property type="component" value="Chromosome 3"/>
</dbReference>
<dbReference type="ExpressionAtlas" id="Q9SF32">
    <property type="expression patterns" value="baseline and differential"/>
</dbReference>
<dbReference type="GO" id="GO:0005737">
    <property type="term" value="C:cytoplasm"/>
    <property type="evidence" value="ECO:0007669"/>
    <property type="project" value="UniProtKB-KW"/>
</dbReference>
<dbReference type="GO" id="GO:0005874">
    <property type="term" value="C:microtubule"/>
    <property type="evidence" value="ECO:0000314"/>
    <property type="project" value="UniProtKB"/>
</dbReference>
<dbReference type="GO" id="GO:0005730">
    <property type="term" value="C:nucleolus"/>
    <property type="evidence" value="ECO:0007669"/>
    <property type="project" value="UniProtKB-SubCell"/>
</dbReference>
<dbReference type="GO" id="GO:0005634">
    <property type="term" value="C:nucleus"/>
    <property type="evidence" value="ECO:0000314"/>
    <property type="project" value="UniProtKB"/>
</dbReference>
<dbReference type="GO" id="GO:0005516">
    <property type="term" value="F:calmodulin binding"/>
    <property type="evidence" value="ECO:0007669"/>
    <property type="project" value="UniProtKB-KW"/>
</dbReference>
<dbReference type="GO" id="GO:0008017">
    <property type="term" value="F:microtubule binding"/>
    <property type="evidence" value="ECO:0000314"/>
    <property type="project" value="UniProtKB"/>
</dbReference>
<dbReference type="CDD" id="cd23767">
    <property type="entry name" value="IQCD"/>
    <property type="match status" value="1"/>
</dbReference>
<dbReference type="InterPro" id="IPR000048">
    <property type="entry name" value="IQ_motif_EF-hand-BS"/>
</dbReference>
<dbReference type="PANTHER" id="PTHR32295">
    <property type="entry name" value="IQ-DOMAIN 5-RELATED"/>
    <property type="match status" value="1"/>
</dbReference>
<dbReference type="PANTHER" id="PTHR32295:SF150">
    <property type="entry name" value="PROTEIN IQ-DOMAIN 1"/>
    <property type="match status" value="1"/>
</dbReference>
<dbReference type="Pfam" id="PF00612">
    <property type="entry name" value="IQ"/>
    <property type="match status" value="1"/>
</dbReference>
<dbReference type="SMART" id="SM00015">
    <property type="entry name" value="IQ"/>
    <property type="match status" value="1"/>
</dbReference>
<dbReference type="PROSITE" id="PS50096">
    <property type="entry name" value="IQ"/>
    <property type="match status" value="1"/>
</dbReference>
<name>IQD1_ARATH</name>
<keyword id="KW-0025">Alternative splicing</keyword>
<keyword id="KW-0112">Calmodulin-binding</keyword>
<keyword id="KW-0963">Cytoplasm</keyword>
<keyword id="KW-0206">Cytoskeleton</keyword>
<keyword id="KW-0539">Nucleus</keyword>
<keyword id="KW-1185">Reference proteome</keyword>
<accession>Q9SF32</accession>
<evidence type="ECO:0000255" key="1">
    <source>
        <dbReference type="PROSITE-ProRule" id="PRU00116"/>
    </source>
</evidence>
<evidence type="ECO:0000255" key="2">
    <source>
        <dbReference type="PROSITE-ProRule" id="PRU00768"/>
    </source>
</evidence>
<evidence type="ECO:0000256" key="3">
    <source>
        <dbReference type="SAM" id="MobiDB-lite"/>
    </source>
</evidence>
<evidence type="ECO:0000269" key="4">
    <source>
    </source>
</evidence>
<evidence type="ECO:0000269" key="5">
    <source>
    </source>
</evidence>
<evidence type="ECO:0000269" key="6">
    <source>
    </source>
</evidence>
<evidence type="ECO:0000303" key="7">
    <source>
    </source>
</evidence>
<evidence type="ECO:0000303" key="8">
    <source>
    </source>
</evidence>
<evidence type="ECO:0000305" key="9"/>
<evidence type="ECO:0000312" key="10">
    <source>
        <dbReference type="Araport" id="AT3G09710"/>
    </source>
</evidence>
<evidence type="ECO:0000312" key="11">
    <source>
        <dbReference type="EMBL" id="AAF23301.1"/>
    </source>
</evidence>
<gene>
    <name evidence="7" type="primary">IQD1</name>
    <name evidence="10" type="ordered locus">At3g09710</name>
    <name evidence="11" type="ORF">F11F8.30</name>
</gene>
<protein>
    <recommendedName>
        <fullName evidence="7">Protein IQ-DOMAIN 1</fullName>
        <shortName evidence="8">AtIQD1</shortName>
    </recommendedName>
</protein>
<comment type="function">
    <text evidence="4 5">May be involved in cooperative interactions with calmodulins or calmodulin-like proteins. Modulates expression of glucosinolate pathway genes. May associate with nucleic acids and regulate gene expression at the transcriptional or post-transcriptional level (PubMed:15960618, PubMed:23204523). Recruits KLCR1 and calmodulin proteins to microtubules, thus being a potential scaffold in cellular signaling and trafficking (PubMed:23204523).</text>
</comment>
<comment type="subunit">
    <text evidence="4 5">Binds to multiple calmodulin (CaM) in the presence of Ca(2+)(e.g. CaM1 and CaM2) and CaM-like (e.g. CML8 and CML9) proteins (PubMed:15960618, PubMed:23204523). Interacts with KLCR1 (PubMed:23204523).</text>
</comment>
<comment type="subcellular location">
    <subcellularLocation>
        <location evidence="2 4 5 6">Nucleus</location>
    </subcellularLocation>
    <subcellularLocation>
        <location evidence="6">Nucleus</location>
        <location evidence="6">Nucleolus</location>
    </subcellularLocation>
    <subcellularLocation>
        <location evidence="5 6">Cytoplasm</location>
        <location evidence="5 6">Cytoskeleton</location>
    </subcellularLocation>
    <text evidence="5 6">Recruits KLCR1 and calmodulin (CaM2) to microtubules, nucleus and nucleolus.</text>
</comment>
<comment type="alternative products">
    <event type="alternative splicing"/>
    <isoform>
        <id>Q9SF32-1</id>
        <name>1</name>
        <sequence type="displayed"/>
    </isoform>
    <text>A number of isoforms are produced. According to EST sequences.</text>
</comment>
<comment type="tissue specificity">
    <text evidence="4">Expressed in roots, flowers, stems, siliques, inflorescence stems and whole shoots. Restricted to the vascular bundles.</text>
</comment>
<comment type="induction">
    <text evidence="4">By mechanical stimuli and aphid infestation, but not by jasmonate, salicylic acid, 1-aminocyclopropane-1-carboxylate (ACC) ou auxin (IAA).</text>
</comment>
<comment type="miscellaneous">
    <text evidence="4">IQD1 overexpression leads to increased resistance against herbivory by generalist chewing and phloem-feeding insects.</text>
</comment>
<comment type="similarity">
    <text evidence="9">Belongs to the IQD family.</text>
</comment>
<organism>
    <name type="scientific">Arabidopsis thaliana</name>
    <name type="common">Mouse-ear cress</name>
    <dbReference type="NCBI Taxonomy" id="3702"/>
    <lineage>
        <taxon>Eukaryota</taxon>
        <taxon>Viridiplantae</taxon>
        <taxon>Streptophyta</taxon>
        <taxon>Embryophyta</taxon>
        <taxon>Tracheophyta</taxon>
        <taxon>Spermatophyta</taxon>
        <taxon>Magnoliopsida</taxon>
        <taxon>eudicotyledons</taxon>
        <taxon>Gunneridae</taxon>
        <taxon>Pentapetalae</taxon>
        <taxon>rosids</taxon>
        <taxon>malvids</taxon>
        <taxon>Brassicales</taxon>
        <taxon>Brassicaceae</taxon>
        <taxon>Camelineae</taxon>
        <taxon>Arabidopsis</taxon>
    </lineage>
</organism>
<feature type="chain" id="PRO_0000311120" description="Protein IQ-DOMAIN 1">
    <location>
        <begin position="1"/>
        <end position="454"/>
    </location>
</feature>
<feature type="domain" description="IQ" evidence="1">
    <location>
        <begin position="107"/>
        <end position="136"/>
    </location>
</feature>
<feature type="region of interest" description="Calmodulin-binding" evidence="8">
    <location>
        <begin position="103"/>
        <end position="113"/>
    </location>
</feature>
<feature type="region of interest" description="Disordered" evidence="3">
    <location>
        <begin position="272"/>
        <end position="454"/>
    </location>
</feature>
<feature type="short sequence motif" description="Nuclear localization signal" evidence="2">
    <location>
        <begin position="421"/>
        <end position="428"/>
    </location>
</feature>
<feature type="compositionally biased region" description="Polar residues" evidence="3">
    <location>
        <begin position="280"/>
        <end position="328"/>
    </location>
</feature>
<feature type="compositionally biased region" description="Basic and acidic residues" evidence="3">
    <location>
        <begin position="343"/>
        <end position="356"/>
    </location>
</feature>
<feature type="compositionally biased region" description="Polar residues" evidence="3">
    <location>
        <begin position="371"/>
        <end position="388"/>
    </location>
</feature>
<feature type="compositionally biased region" description="Low complexity" evidence="3">
    <location>
        <begin position="397"/>
        <end position="412"/>
    </location>
</feature>
<feature type="compositionally biased region" description="Basic and acidic residues" evidence="3">
    <location>
        <begin position="442"/>
        <end position="454"/>
    </location>
</feature>
<reference key="1">
    <citation type="journal article" date="2005" name="Plant J.">
        <title>Arabidopsis IQD1, a novel calmodulin-binding nuclear protein, stimulates glucosinolate accumulation and plant defense.</title>
        <authorList>
            <person name="Levy M."/>
            <person name="Wang Q."/>
            <person name="Kaspi R."/>
            <person name="Parrella M.P."/>
            <person name="Abel S."/>
        </authorList>
    </citation>
    <scope>NUCLEOTIDE SEQUENCE [MRNA]</scope>
    <scope>FUNCTION</scope>
    <scope>SUBCELLULAR LOCATION</scope>
    <scope>TISSUE SPECIFICITY</scope>
    <scope>INDUCTION</scope>
    <scope>INTERACTION WITH CALMODULIN</scope>
    <scope>GENE FAMILY</scope>
    <source>
        <strain>cv. Columbia</strain>
    </source>
</reference>
<reference key="2">
    <citation type="journal article" date="2000" name="Nature">
        <title>Sequence and analysis of chromosome 3 of the plant Arabidopsis thaliana.</title>
        <authorList>
            <person name="Salanoubat M."/>
            <person name="Lemcke K."/>
            <person name="Rieger M."/>
            <person name="Ansorge W."/>
            <person name="Unseld M."/>
            <person name="Fartmann B."/>
            <person name="Valle G."/>
            <person name="Bloecker H."/>
            <person name="Perez-Alonso M."/>
            <person name="Obermaier B."/>
            <person name="Delseny M."/>
            <person name="Boutry M."/>
            <person name="Grivell L.A."/>
            <person name="Mache R."/>
            <person name="Puigdomenech P."/>
            <person name="De Simone V."/>
            <person name="Choisne N."/>
            <person name="Artiguenave F."/>
            <person name="Robert C."/>
            <person name="Brottier P."/>
            <person name="Wincker P."/>
            <person name="Cattolico L."/>
            <person name="Weissenbach J."/>
            <person name="Saurin W."/>
            <person name="Quetier F."/>
            <person name="Schaefer M."/>
            <person name="Mueller-Auer S."/>
            <person name="Gabel C."/>
            <person name="Fuchs M."/>
            <person name="Benes V."/>
            <person name="Wurmbach E."/>
            <person name="Drzonek H."/>
            <person name="Erfle H."/>
            <person name="Jordan N."/>
            <person name="Bangert S."/>
            <person name="Wiedelmann R."/>
            <person name="Kranz H."/>
            <person name="Voss H."/>
            <person name="Holland R."/>
            <person name="Brandt P."/>
            <person name="Nyakatura G."/>
            <person name="Vezzi A."/>
            <person name="D'Angelo M."/>
            <person name="Pallavicini A."/>
            <person name="Toppo S."/>
            <person name="Simionati B."/>
            <person name="Conrad A."/>
            <person name="Hornischer K."/>
            <person name="Kauer G."/>
            <person name="Loehnert T.-H."/>
            <person name="Nordsiek G."/>
            <person name="Reichelt J."/>
            <person name="Scharfe M."/>
            <person name="Schoen O."/>
            <person name="Bargues M."/>
            <person name="Terol J."/>
            <person name="Climent J."/>
            <person name="Navarro P."/>
            <person name="Collado C."/>
            <person name="Perez-Perez A."/>
            <person name="Ottenwaelder B."/>
            <person name="Duchemin D."/>
            <person name="Cooke R."/>
            <person name="Laudie M."/>
            <person name="Berger-Llauro C."/>
            <person name="Purnelle B."/>
            <person name="Masuy D."/>
            <person name="de Haan M."/>
            <person name="Maarse A.C."/>
            <person name="Alcaraz J.-P."/>
            <person name="Cottet A."/>
            <person name="Casacuberta E."/>
            <person name="Monfort A."/>
            <person name="Argiriou A."/>
            <person name="Flores M."/>
            <person name="Liguori R."/>
            <person name="Vitale D."/>
            <person name="Mannhaupt G."/>
            <person name="Haase D."/>
            <person name="Schoof H."/>
            <person name="Rudd S."/>
            <person name="Zaccaria P."/>
            <person name="Mewes H.-W."/>
            <person name="Mayer K.F.X."/>
            <person name="Kaul S."/>
            <person name="Town C.D."/>
            <person name="Koo H.L."/>
            <person name="Tallon L.J."/>
            <person name="Jenkins J."/>
            <person name="Rooney T."/>
            <person name="Rizzo M."/>
            <person name="Walts A."/>
            <person name="Utterback T."/>
            <person name="Fujii C.Y."/>
            <person name="Shea T.P."/>
            <person name="Creasy T.H."/>
            <person name="Haas B."/>
            <person name="Maiti R."/>
            <person name="Wu D."/>
            <person name="Peterson J."/>
            <person name="Van Aken S."/>
            <person name="Pai G."/>
            <person name="Militscher J."/>
            <person name="Sellers P."/>
            <person name="Gill J.E."/>
            <person name="Feldblyum T.V."/>
            <person name="Preuss D."/>
            <person name="Lin X."/>
            <person name="Nierman W.C."/>
            <person name="Salzberg S.L."/>
            <person name="White O."/>
            <person name="Venter J.C."/>
            <person name="Fraser C.M."/>
            <person name="Kaneko T."/>
            <person name="Nakamura Y."/>
            <person name="Sato S."/>
            <person name="Kato T."/>
            <person name="Asamizu E."/>
            <person name="Sasamoto S."/>
            <person name="Kimura T."/>
            <person name="Idesawa K."/>
            <person name="Kawashima K."/>
            <person name="Kishida Y."/>
            <person name="Kiyokawa C."/>
            <person name="Kohara M."/>
            <person name="Matsumoto M."/>
            <person name="Matsuno A."/>
            <person name="Muraki A."/>
            <person name="Nakayama S."/>
            <person name="Nakazaki N."/>
            <person name="Shinpo S."/>
            <person name="Takeuchi C."/>
            <person name="Wada T."/>
            <person name="Watanabe A."/>
            <person name="Yamada M."/>
            <person name="Yasuda M."/>
            <person name="Tabata S."/>
        </authorList>
    </citation>
    <scope>NUCLEOTIDE SEQUENCE [LARGE SCALE GENOMIC DNA]</scope>
    <source>
        <strain>cv. Columbia</strain>
    </source>
</reference>
<reference key="3">
    <citation type="journal article" date="2017" name="Plant J.">
        <title>Araport11: a complete reannotation of the Arabidopsis thaliana reference genome.</title>
        <authorList>
            <person name="Cheng C.Y."/>
            <person name="Krishnakumar V."/>
            <person name="Chan A.P."/>
            <person name="Thibaud-Nissen F."/>
            <person name="Schobel S."/>
            <person name="Town C.D."/>
        </authorList>
    </citation>
    <scope>GENOME REANNOTATION</scope>
    <source>
        <strain>cv. Columbia</strain>
    </source>
</reference>
<reference key="4">
    <citation type="submission" date="2004-12" db="EMBL/GenBank/DDBJ databases">
        <title>Arabidopsis ORF clones.</title>
        <authorList>
            <person name="Shinn P."/>
            <person name="Chen H."/>
            <person name="Cheuk R.F."/>
            <person name="Kim C.J."/>
            <person name="Ecker J.R."/>
        </authorList>
    </citation>
    <scope>NUCLEOTIDE SEQUENCE [LARGE SCALE MRNA]</scope>
    <source>
        <strain>cv. Columbia</strain>
    </source>
</reference>
<reference key="5">
    <citation type="journal article" date="2005" name="BMC Evol. Biol.">
        <title>Genome-wide comparative analysis of the IQD gene families in Arabidopsis thaliana and Oryza sativa.</title>
        <authorList>
            <person name="Abel S."/>
            <person name="Savchenko T."/>
            <person name="Levy M."/>
        </authorList>
    </citation>
    <scope>INTERACTION WITH CALMODULIN</scope>
    <scope>GENE FAMILY</scope>
    <scope>NOMENCLATURE</scope>
    <source>
        <strain>cv. Columbia</strain>
    </source>
</reference>
<reference key="6">
    <citation type="journal article" date="2013" name="J. Biol. Chem.">
        <title>Arabidopsis calmodulin-binding protein IQ67-domain 1 localizes to microtubules and interacts with kinesin light chain-related protein-1.</title>
        <authorList>
            <person name="Buerstenbinder K."/>
            <person name="Savchenko T."/>
            <person name="Mueller J."/>
            <person name="Adamson A.W."/>
            <person name="Stamm G."/>
            <person name="Kwong R."/>
            <person name="Zipp B.J."/>
            <person name="Dinesh D.C."/>
            <person name="Abel S."/>
        </authorList>
    </citation>
    <scope>FUNCTION</scope>
    <scope>INTERACTION WITH KLCR1; CAM1; CAM2; CML8 AND CML9</scope>
    <scope>SUBCELLULAR LOCATION</scope>
    <source>
        <strain>cv. Columbia</strain>
    </source>
</reference>
<reference key="7">
    <citation type="journal article" date="2013" name="Plant Signal. Behav.">
        <title>The emerging function of IQD proteins as scaffolds in cellular signaling and trafficking.</title>
        <authorList>
            <person name="Abel S."/>
            <person name="Buerstenbinder K."/>
            <person name="Mueller J."/>
        </authorList>
    </citation>
    <scope>REVIEW</scope>
</reference>
<reference key="8">
    <citation type="journal article" date="2017" name="Plant Physiol.">
        <title>The IQD family of calmodulin-binding proteins links calcium signaling to microtubules, membrane subdomains, and the nucleus.</title>
        <authorList>
            <person name="Buerstenbinder K."/>
            <person name="Moeller B."/>
            <person name="Ploetner R."/>
            <person name="Stamm G."/>
            <person name="Hause G."/>
            <person name="Mitra D."/>
            <person name="Abel S."/>
        </authorList>
    </citation>
    <scope>SUBCELLULAR LOCATION</scope>
    <scope>INTERACTION WITH CALMODULIN</scope>
    <source>
        <strain>cv. Columbia</strain>
    </source>
</reference>
<reference key="9">
    <citation type="journal article" date="2017" name="Plant Signal. Behav.">
        <title>Functions of IQD proteins as hubs in cellular calcium and auxin signaling: A toolbox for shape formation and tissue-specification in plants?</title>
        <authorList>
            <person name="Buerstenbinder K."/>
            <person name="Mitra D."/>
            <person name="Quegwer J."/>
        </authorList>
    </citation>
    <scope>REVIEW</scope>
</reference>
<sequence>MVKKAKWLKNVKKAFSPDSKKLKHESVECQDSVISYPVLIATSRSSSPQFEVRVDEVNYEQKKNLYPPSSDSVTATVAHVLVDSPPSSPESVHQAIVVNRFAGKSKEEAAAILIQSTFRGHLARRESQVMRGQERLKLLMEGSVVQRQAAITLKCMQTLSRVQSQIRSRRIRMSEENQARHKQLLQKHAKELGGLKNGGNWNYSNQSKEQVEAGMLHKYEATMRRERALAYAFTHQQNLKSFSKTANPMFMDPSNPTWGWSWLERWMAGRPWESSEKEQNTTNNDNSSVKNSTNRNSQGGETAKSSNRNKLNSSTKPNTPSASSTATRNPRKKRPIPSSIKSKSSDDEAKSSERNRRPSIARPSVSDDETLSSSTARRSSNLIPTTKSARGKPKSQTSSRVAVTTSTTEESSILPEKAPAKKRLSTSASPAPKPRRSSAPPKVEKGVLKAERTP</sequence>
<proteinExistence type="evidence at protein level"/>